<accession>P0C2T8</accession>
<accession>P37897</accession>
<name>AMPN_LACLC</name>
<comment type="function">
    <text evidence="1">Aminopeptidase with broad substrate specificity to several peptides. It has more affinity for oligopeptides than for dipeptides. It plays an essential role in the metabolism, it may be involved in nitrogen supply or protein turnover (By similarity).</text>
</comment>
<comment type="catalytic activity">
    <reaction>
        <text>Release of an N-terminal amino acid, Xaa-|-Yaa- from a peptide, amide or arylamide. Xaa is preferably Ala, but may be most amino acids including Pro (slow action). When a terminal hydrophobic residue is followed by a prolyl residue, the two may be released as an intact Xaa-Pro dipeptide.</text>
        <dbReference type="EC" id="3.4.11.2"/>
    </reaction>
</comment>
<comment type="cofactor">
    <cofactor evidence="1">
        <name>Zn(2+)</name>
        <dbReference type="ChEBI" id="CHEBI:29105"/>
    </cofactor>
    <text evidence="1">Binds 1 zinc ion per subunit.</text>
</comment>
<comment type="subunit">
    <text evidence="1">Monomer.</text>
</comment>
<comment type="subcellular location">
    <subcellularLocation>
        <location evidence="1">Cytoplasm</location>
    </subcellularLocation>
    <text evidence="1">It may be secreted through an unknown mechanism.</text>
</comment>
<comment type="similarity">
    <text evidence="4">Belongs to the peptidase M1 family.</text>
</comment>
<evidence type="ECO:0000250" key="1"/>
<evidence type="ECO:0000255" key="2">
    <source>
        <dbReference type="PROSITE-ProRule" id="PRU10095"/>
    </source>
</evidence>
<evidence type="ECO:0000269" key="3">
    <source>
    </source>
</evidence>
<evidence type="ECO:0000305" key="4"/>
<dbReference type="EC" id="3.4.11.2"/>
<dbReference type="EMBL" id="X61230">
    <property type="protein sequence ID" value="CAA43547.1"/>
    <property type="molecule type" value="Genomic_DNA"/>
</dbReference>
<dbReference type="PIR" id="JN0324">
    <property type="entry name" value="JN0324"/>
</dbReference>
<dbReference type="SMR" id="P0C2T8"/>
<dbReference type="MEROPS" id="M01.002"/>
<dbReference type="SABIO-RK" id="P0C2T8"/>
<dbReference type="GO" id="GO:0005737">
    <property type="term" value="C:cytoplasm"/>
    <property type="evidence" value="ECO:0007669"/>
    <property type="project" value="UniProtKB-SubCell"/>
</dbReference>
<dbReference type="GO" id="GO:0005615">
    <property type="term" value="C:extracellular space"/>
    <property type="evidence" value="ECO:0007669"/>
    <property type="project" value="TreeGrafter"/>
</dbReference>
<dbReference type="GO" id="GO:0016020">
    <property type="term" value="C:membrane"/>
    <property type="evidence" value="ECO:0007669"/>
    <property type="project" value="TreeGrafter"/>
</dbReference>
<dbReference type="GO" id="GO:0016285">
    <property type="term" value="F:alanyl aminopeptidase activity"/>
    <property type="evidence" value="ECO:0007669"/>
    <property type="project" value="UniProtKB-EC"/>
</dbReference>
<dbReference type="GO" id="GO:0070006">
    <property type="term" value="F:metalloaminopeptidase activity"/>
    <property type="evidence" value="ECO:0007669"/>
    <property type="project" value="TreeGrafter"/>
</dbReference>
<dbReference type="GO" id="GO:0042277">
    <property type="term" value="F:peptide binding"/>
    <property type="evidence" value="ECO:0007669"/>
    <property type="project" value="TreeGrafter"/>
</dbReference>
<dbReference type="GO" id="GO:0008270">
    <property type="term" value="F:zinc ion binding"/>
    <property type="evidence" value="ECO:0007669"/>
    <property type="project" value="InterPro"/>
</dbReference>
<dbReference type="GO" id="GO:0043171">
    <property type="term" value="P:peptide catabolic process"/>
    <property type="evidence" value="ECO:0007669"/>
    <property type="project" value="TreeGrafter"/>
</dbReference>
<dbReference type="GO" id="GO:0006508">
    <property type="term" value="P:proteolysis"/>
    <property type="evidence" value="ECO:0007669"/>
    <property type="project" value="UniProtKB-KW"/>
</dbReference>
<dbReference type="CDD" id="cd09601">
    <property type="entry name" value="M1_APN-Q_like"/>
    <property type="match status" value="1"/>
</dbReference>
<dbReference type="FunFam" id="1.10.390.10:FF:000013">
    <property type="entry name" value="Aminopeptidase N"/>
    <property type="match status" value="1"/>
</dbReference>
<dbReference type="Gene3D" id="1.25.50.20">
    <property type="match status" value="1"/>
</dbReference>
<dbReference type="Gene3D" id="1.10.390.10">
    <property type="entry name" value="Neutral Protease Domain 2"/>
    <property type="match status" value="1"/>
</dbReference>
<dbReference type="Gene3D" id="2.60.40.1730">
    <property type="entry name" value="tricorn interacting facor f3 domain"/>
    <property type="match status" value="1"/>
</dbReference>
<dbReference type="InterPro" id="IPR045357">
    <property type="entry name" value="Aminopeptidase_N-like_N"/>
</dbReference>
<dbReference type="InterPro" id="IPR042097">
    <property type="entry name" value="Aminopeptidase_N-like_N_sf"/>
</dbReference>
<dbReference type="InterPro" id="IPR024571">
    <property type="entry name" value="ERAP1-like_C_dom"/>
</dbReference>
<dbReference type="InterPro" id="IPR034016">
    <property type="entry name" value="M1_APN-typ"/>
</dbReference>
<dbReference type="InterPro" id="IPR001930">
    <property type="entry name" value="Peptidase_M1"/>
</dbReference>
<dbReference type="InterPro" id="IPR050344">
    <property type="entry name" value="Peptidase_M1_aminopeptidases"/>
</dbReference>
<dbReference type="InterPro" id="IPR014782">
    <property type="entry name" value="Peptidase_M1_dom"/>
</dbReference>
<dbReference type="InterPro" id="IPR027268">
    <property type="entry name" value="Peptidase_M4/M1_CTD_sf"/>
</dbReference>
<dbReference type="PANTHER" id="PTHR11533">
    <property type="entry name" value="PROTEASE M1 ZINC METALLOPROTEASE"/>
    <property type="match status" value="1"/>
</dbReference>
<dbReference type="PANTHER" id="PTHR11533:SF174">
    <property type="entry name" value="PUROMYCIN-SENSITIVE AMINOPEPTIDASE-RELATED"/>
    <property type="match status" value="1"/>
</dbReference>
<dbReference type="Pfam" id="PF11838">
    <property type="entry name" value="ERAP1_C"/>
    <property type="match status" value="1"/>
</dbReference>
<dbReference type="Pfam" id="PF01433">
    <property type="entry name" value="Peptidase_M1"/>
    <property type="match status" value="1"/>
</dbReference>
<dbReference type="Pfam" id="PF17900">
    <property type="entry name" value="Peptidase_M1_N"/>
    <property type="match status" value="1"/>
</dbReference>
<dbReference type="PRINTS" id="PR00756">
    <property type="entry name" value="ALADIPTASE"/>
</dbReference>
<dbReference type="SUPFAM" id="SSF63737">
    <property type="entry name" value="Leukotriene A4 hydrolase N-terminal domain"/>
    <property type="match status" value="1"/>
</dbReference>
<dbReference type="SUPFAM" id="SSF55486">
    <property type="entry name" value="Metalloproteases ('zincins'), catalytic domain"/>
    <property type="match status" value="1"/>
</dbReference>
<dbReference type="PROSITE" id="PS00142">
    <property type="entry name" value="ZINC_PROTEASE"/>
    <property type="match status" value="1"/>
</dbReference>
<gene>
    <name type="primary">pepN</name>
    <name type="synonym">lap</name>
</gene>
<keyword id="KW-0031">Aminopeptidase</keyword>
<keyword id="KW-0963">Cytoplasm</keyword>
<keyword id="KW-0903">Direct protein sequencing</keyword>
<keyword id="KW-0378">Hydrolase</keyword>
<keyword id="KW-0479">Metal-binding</keyword>
<keyword id="KW-0482">Metalloprotease</keyword>
<keyword id="KW-0645">Protease</keyword>
<keyword id="KW-0862">Zinc</keyword>
<feature type="initiator methionine" description="Removed" evidence="3">
    <location>
        <position position="1"/>
    </location>
</feature>
<feature type="chain" id="PRO_0000095075" description="Aminopeptidase N">
    <location>
        <begin position="2"/>
        <end position="846"/>
    </location>
</feature>
<feature type="active site" description="Proton acceptor" evidence="2">
    <location>
        <position position="289"/>
    </location>
</feature>
<feature type="binding site" evidence="1">
    <location>
        <position position="120"/>
    </location>
    <ligand>
        <name>substrate</name>
    </ligand>
</feature>
<feature type="binding site" evidence="1">
    <location>
        <begin position="252"/>
        <end position="256"/>
    </location>
    <ligand>
        <name>substrate</name>
    </ligand>
</feature>
<feature type="binding site" evidence="2">
    <location>
        <position position="288"/>
    </location>
    <ligand>
        <name>Zn(2+)</name>
        <dbReference type="ChEBI" id="CHEBI:29105"/>
        <note>catalytic</note>
    </ligand>
</feature>
<feature type="binding site" evidence="2">
    <location>
        <position position="292"/>
    </location>
    <ligand>
        <name>Zn(2+)</name>
        <dbReference type="ChEBI" id="CHEBI:29105"/>
        <note>catalytic</note>
    </ligand>
</feature>
<feature type="binding site" evidence="2">
    <location>
        <position position="311"/>
    </location>
    <ligand>
        <name>Zn(2+)</name>
        <dbReference type="ChEBI" id="CHEBI:29105"/>
        <note>catalytic</note>
    </ligand>
</feature>
<feature type="site" description="Transition state stabilizer" evidence="1">
    <location>
        <position position="375"/>
    </location>
</feature>
<sequence>MAVKRLIETFVPENYKIFLDIDRKTKKIKGQVAITGEAKDTVVAFHAKGLHFNKVRAFSVDTNFIENEEDEEIVVKIGETGRVTVSFEYEAELTDNMMGIYPSYYEVNGEKKMLIGTQFESHFARQAFPSIDEPEAKATFDLSVKFDEEEGDIIVSNMPELLNINGIHVFERTVKMSSYLLAFVFGELQYKKGKTKSGVEVGAFATKAHSQAALDFPLDIAIRSIEFYEDYYQTPYPLPHSWHIALPDFSSGAMENWGCITYREVCMLVDPENATIQSKQYVATVIAHELAHQWFGDLVTMQWWDDLWLNESFANNMEYVCMDALEPSWNVWESFSISEANMALNRDATDGVQSVHVEVTHPDEIGTLFDPAIVYAKGSRLMVMLRKWLGDEDFAAGLALYFKRHQYGNTVGDNLWDALAEVSGKDVAAFMHSWVNQPGYPVVTAEVVDDTLILSQKQFFVGEGVDKGRLWNVPLNTNWTGLPDLLSSEKVEIPGFAALKTKNNGKALFLNDANMAHYIIDYKGALLTDLLSEVESLENVTKFQILQDRKLLAKAGVISYADVVNILPSFTNEESYLVNTGLSQLISELELFVDEDSETEKAFQSLVGKLFAKNYARLGWDKVAGESAGDESLRGIVLSKTLYSENADAKTKASQIFATHKENLASIPADIRPIVLNNEIKTTNSAELVKTYRETYIKTSLQEFKRELEGAVALIKDEKVIAELLESFKNADIVKPQDIAFSWFYLLRNDFSQDAAWAWEKANWASLEEKLGGDMSYDKFVIYPGNTFKTADKLAEYKAFFEPKLENQGLKRSIEMAIKQITARVALIDSQKAAVDKAITDIAEKL</sequence>
<protein>
    <recommendedName>
        <fullName>Aminopeptidase N</fullName>
        <ecNumber>3.4.11.2</ecNumber>
    </recommendedName>
    <alternativeName>
        <fullName>Alanine aminopeptidase</fullName>
    </alternativeName>
    <alternativeName>
        <fullName>Lysyl aminopeptidase</fullName>
        <shortName>Lys-AP</shortName>
    </alternativeName>
</protein>
<organism>
    <name type="scientific">Lactococcus lactis subsp. cremoris</name>
    <name type="common">Streptococcus cremoris</name>
    <dbReference type="NCBI Taxonomy" id="1359"/>
    <lineage>
        <taxon>Bacteria</taxon>
        <taxon>Bacillati</taxon>
        <taxon>Bacillota</taxon>
        <taxon>Bacilli</taxon>
        <taxon>Lactobacillales</taxon>
        <taxon>Streptococcaceae</taxon>
        <taxon>Lactococcus</taxon>
    </lineage>
</organism>
<proteinExistence type="evidence at protein level"/>
<reference key="1">
    <citation type="journal article" date="1992" name="Gene">
        <title>Sequence of a gene (lap) encoding a 95.3-kDa aminopeptidase from Lactococcus lactis ssp. cremoris Wg2.</title>
        <authorList>
            <person name="Stroman P."/>
        </authorList>
    </citation>
    <scope>NUCLEOTIDE SEQUENCE [GENOMIC DNA]</scope>
    <source>
        <strain>Wg2</strain>
    </source>
</reference>
<reference key="2">
    <citation type="journal article" date="1990" name="Appl. Environ. Microbiol.">
        <title>Purification and characterization of an aminopeptidase from Lactococcus lactis subsp. cremoris Wg2.</title>
        <authorList>
            <person name="Tan P.S.T."/>
            <person name="Konings W.N."/>
        </authorList>
    </citation>
    <scope>PROTEIN SEQUENCE OF 2-34</scope>
    <source>
        <strain>Wg2</strain>
    </source>
</reference>